<name>RRP41_SULAC</name>
<reference key="1">
    <citation type="journal article" date="2005" name="J. Bacteriol.">
        <title>The genome of Sulfolobus acidocaldarius, a model organism of the Crenarchaeota.</title>
        <authorList>
            <person name="Chen L."/>
            <person name="Bruegger K."/>
            <person name="Skovgaard M."/>
            <person name="Redder P."/>
            <person name="She Q."/>
            <person name="Torarinsson E."/>
            <person name="Greve B."/>
            <person name="Awayez M."/>
            <person name="Zibat A."/>
            <person name="Klenk H.-P."/>
            <person name="Garrett R.A."/>
        </authorList>
    </citation>
    <scope>NUCLEOTIDE SEQUENCE [LARGE SCALE GENOMIC DNA]</scope>
    <source>
        <strain>ATCC 33909 / DSM 639 / JCM 8929 / NBRC 15157 / NCIMB 11770</strain>
    </source>
</reference>
<evidence type="ECO:0000255" key="1">
    <source>
        <dbReference type="HAMAP-Rule" id="MF_00591"/>
    </source>
</evidence>
<protein>
    <recommendedName>
        <fullName evidence="1">Exosome complex component Rrp41</fullName>
        <ecNumber evidence="1">3.1.13.-</ecNumber>
    </recommendedName>
</protein>
<dbReference type="EC" id="3.1.13.-" evidence="1"/>
<dbReference type="EMBL" id="CP000077">
    <property type="protein sequence ID" value="AAY80002.1"/>
    <property type="molecule type" value="Genomic_DNA"/>
</dbReference>
<dbReference type="RefSeq" id="WP_011277504.1">
    <property type="nucleotide sequence ID" value="NC_007181.1"/>
</dbReference>
<dbReference type="SMR" id="Q4JB27"/>
<dbReference type="STRING" id="330779.Saci_0610"/>
<dbReference type="GeneID" id="14551131"/>
<dbReference type="GeneID" id="78440953"/>
<dbReference type="KEGG" id="sai:Saci_0610"/>
<dbReference type="PATRIC" id="fig|330779.12.peg.589"/>
<dbReference type="eggNOG" id="arCOG01575">
    <property type="taxonomic scope" value="Archaea"/>
</dbReference>
<dbReference type="HOGENOM" id="CLU_063514_0_0_2"/>
<dbReference type="Proteomes" id="UP000001018">
    <property type="component" value="Chromosome"/>
</dbReference>
<dbReference type="GO" id="GO:0000177">
    <property type="term" value="C:cytoplasmic exosome (RNase complex)"/>
    <property type="evidence" value="ECO:0007669"/>
    <property type="project" value="TreeGrafter"/>
</dbReference>
<dbReference type="GO" id="GO:0000175">
    <property type="term" value="F:3'-5'-RNA exonuclease activity"/>
    <property type="evidence" value="ECO:0007669"/>
    <property type="project" value="UniProtKB-UniRule"/>
</dbReference>
<dbReference type="GO" id="GO:0003723">
    <property type="term" value="F:RNA binding"/>
    <property type="evidence" value="ECO:0007669"/>
    <property type="project" value="TreeGrafter"/>
</dbReference>
<dbReference type="GO" id="GO:0010467">
    <property type="term" value="P:gene expression"/>
    <property type="evidence" value="ECO:0007669"/>
    <property type="project" value="UniProtKB-ARBA"/>
</dbReference>
<dbReference type="GO" id="GO:0016075">
    <property type="term" value="P:rRNA catabolic process"/>
    <property type="evidence" value="ECO:0007669"/>
    <property type="project" value="TreeGrafter"/>
</dbReference>
<dbReference type="CDD" id="cd11366">
    <property type="entry name" value="RNase_PH_archRRP41"/>
    <property type="match status" value="1"/>
</dbReference>
<dbReference type="FunFam" id="3.30.230.70:FF:000004">
    <property type="entry name" value="Exosome complex component Rrp41"/>
    <property type="match status" value="1"/>
</dbReference>
<dbReference type="Gene3D" id="3.30.230.70">
    <property type="entry name" value="GHMP Kinase, N-terminal domain"/>
    <property type="match status" value="1"/>
</dbReference>
<dbReference type="HAMAP" id="MF_00591">
    <property type="entry name" value="Exosome_Rrp41"/>
    <property type="match status" value="1"/>
</dbReference>
<dbReference type="InterPro" id="IPR001247">
    <property type="entry name" value="ExoRNase_PH_dom1"/>
</dbReference>
<dbReference type="InterPro" id="IPR015847">
    <property type="entry name" value="ExoRNase_PH_dom2"/>
</dbReference>
<dbReference type="InterPro" id="IPR036345">
    <property type="entry name" value="ExoRNase_PH_dom2_sf"/>
</dbReference>
<dbReference type="InterPro" id="IPR027408">
    <property type="entry name" value="PNPase/RNase_PH_dom_sf"/>
</dbReference>
<dbReference type="InterPro" id="IPR020568">
    <property type="entry name" value="Ribosomal_Su5_D2-typ_SF"/>
</dbReference>
<dbReference type="InterPro" id="IPR050080">
    <property type="entry name" value="RNase_PH"/>
</dbReference>
<dbReference type="InterPro" id="IPR011807">
    <property type="entry name" value="Rrp41"/>
</dbReference>
<dbReference type="NCBIfam" id="TIGR02065">
    <property type="entry name" value="ECX1"/>
    <property type="match status" value="1"/>
</dbReference>
<dbReference type="PANTHER" id="PTHR11953">
    <property type="entry name" value="EXOSOME COMPLEX COMPONENT"/>
    <property type="match status" value="1"/>
</dbReference>
<dbReference type="PANTHER" id="PTHR11953:SF0">
    <property type="entry name" value="EXOSOME COMPLEX COMPONENT RRP41"/>
    <property type="match status" value="1"/>
</dbReference>
<dbReference type="Pfam" id="PF01138">
    <property type="entry name" value="RNase_PH"/>
    <property type="match status" value="1"/>
</dbReference>
<dbReference type="Pfam" id="PF03725">
    <property type="entry name" value="RNase_PH_C"/>
    <property type="match status" value="1"/>
</dbReference>
<dbReference type="SUPFAM" id="SSF55666">
    <property type="entry name" value="Ribonuclease PH domain 2-like"/>
    <property type="match status" value="1"/>
</dbReference>
<dbReference type="SUPFAM" id="SSF54211">
    <property type="entry name" value="Ribosomal protein S5 domain 2-like"/>
    <property type="match status" value="1"/>
</dbReference>
<accession>Q4JB27</accession>
<gene>
    <name evidence="1" type="primary">rrp41</name>
    <name type="ordered locus">Saci_0610</name>
</gene>
<proteinExistence type="inferred from homology"/>
<keyword id="KW-0963">Cytoplasm</keyword>
<keyword id="KW-0269">Exonuclease</keyword>
<keyword id="KW-0271">Exosome</keyword>
<keyword id="KW-0378">Hydrolase</keyword>
<keyword id="KW-0540">Nuclease</keyword>
<keyword id="KW-1185">Reference proteome</keyword>
<sequence>MIQLQKPKLILENGLRTDGRKLDELRPIKIELGVLKNADGSAIFEMGNTKVIAAVYGPKEMHPRHLALPDKASLRVRYHMTPFSTDERKNPAPSRREIELSKVIREALESTILLNLFPRTVIDIFMEVLQADAGTRLVALMAASMALADAGIPMRDLIAGVAVGKADGSLVLDLNEQEDMWGEADMPIAVLPSLGQVVLLQLNGFMTPDEFRRAFELAQKGISSIYALQKEALKNKYLEYKEE</sequence>
<feature type="chain" id="PRO_0000139990" description="Exosome complex component Rrp41">
    <location>
        <begin position="1"/>
        <end position="243"/>
    </location>
</feature>
<organism>
    <name type="scientific">Sulfolobus acidocaldarius (strain ATCC 33909 / DSM 639 / JCM 8929 / NBRC 15157 / NCIMB 11770)</name>
    <dbReference type="NCBI Taxonomy" id="330779"/>
    <lineage>
        <taxon>Archaea</taxon>
        <taxon>Thermoproteota</taxon>
        <taxon>Thermoprotei</taxon>
        <taxon>Sulfolobales</taxon>
        <taxon>Sulfolobaceae</taxon>
        <taxon>Sulfolobus</taxon>
    </lineage>
</organism>
<comment type="function">
    <text evidence="1">Catalytic component of the exosome, which is a complex involved in RNA degradation. Has 3'-&gt;5' exoribonuclease activity. Can also synthesize heteromeric RNA-tails.</text>
</comment>
<comment type="subunit">
    <text evidence="1">Component of the archaeal exosome complex. Forms a hexameric ring-like arrangement composed of 3 Rrp41-Rrp42 heterodimers. The hexameric ring associates with a trimer of Rrp4 and/or Csl4 subunits.</text>
</comment>
<comment type="subcellular location">
    <subcellularLocation>
        <location evidence="1">Cytoplasm</location>
    </subcellularLocation>
</comment>
<comment type="similarity">
    <text evidence="1">Belongs to the RNase PH family. Rrp41 subfamily.</text>
</comment>